<sequence length="720" mass="80861">MASLAGDRWREALKNHDIFNNLQERLHLEPQGTSKRIAKNLTFCLNGDLFIWDSVESVFYTTNLRQLNSDGEPDTSRYQTLLCINPPLFEVCQVLVSPSQYHVALIGQRGATVLELPQRWGKKSEFEGGRIQINCKTIPVAERFFTSSASVTLRQAVWYPSETEEPHLVLLTSDNTIRFYNLKEPQSPARVLSVSQMDDDSSVHTRSRSYAASLGETAVAFDFGPLADSPHLSSLRMKAELVVYPLYILYGNGETFLNYISLSHSVGSLGKPMGPLPMYPAAEDNYGYDACAVLCLPCVPNILVIATESGMLYHCVVLEAEEEEDGGAVERWSRGSETAPSLYVFECVELELTLKLPAGEEEEITESDFTCPIRLHRDPLCQHRYHCTHEAGVHSVGLTWFKKLHKFLESDEEDKDSLQELAAEQRCIVEHILCTRPLANSLPAPVRGFWIVSDLSLGATMICITSTYECLLLPLLSSIRPASPPLLCSHPGAGSDSSPLRGLAEDSFEQHIRNILARSSTNPLMLRSGDKDSSPPPSECLQLLSRATQVFREEYILKLGLAHEEMQRRVKLLSGQKNKQLEDLALCREDRKSLTEAAERLADKYEDAKYRQEAIMNRVKRVLGSLRSQLPVLSDSEKDMRKELQTINDQLRHLDNGIKQVNMKKDYQKKQMNAGASPAHSSLTLNAHQRKCLQGVLKEQGEHIAGMMKQIKDIKNHFSF</sequence>
<organism>
    <name type="scientific">Danio rerio</name>
    <name type="common">Zebrafish</name>
    <name type="synonym">Brachydanio rerio</name>
    <dbReference type="NCBI Taxonomy" id="7955"/>
    <lineage>
        <taxon>Eukaryota</taxon>
        <taxon>Metazoa</taxon>
        <taxon>Chordata</taxon>
        <taxon>Craniata</taxon>
        <taxon>Vertebrata</taxon>
        <taxon>Euteleostomi</taxon>
        <taxon>Actinopterygii</taxon>
        <taxon>Neopterygii</taxon>
        <taxon>Teleostei</taxon>
        <taxon>Ostariophysi</taxon>
        <taxon>Cypriniformes</taxon>
        <taxon>Danionidae</taxon>
        <taxon>Danioninae</taxon>
        <taxon>Danio</taxon>
    </lineage>
</organism>
<comment type="function">
    <text evidence="1">Component of the nuclear pore complex.</text>
</comment>
<comment type="subcellular location">
    <subcellularLocation>
        <location evidence="1">Nucleus</location>
        <location evidence="1">Nuclear pore complex</location>
    </subcellularLocation>
</comment>
<comment type="tissue specificity">
    <text evidence="3">Widely expressed. Higher levels of expression are detected in highly proliferative frontal regions of the embryo, e.g. brain, eye and anterior trunk.</text>
</comment>
<proteinExistence type="evidence at protein level"/>
<feature type="chain" id="PRO_0000448055" description="Nucleoporin 88">
    <location>
        <begin position="1"/>
        <end position="720"/>
    </location>
</feature>
<feature type="coiled-coil region" evidence="2">
    <location>
        <begin position="584"/>
        <end position="611"/>
    </location>
</feature>
<feature type="mutagenesis site" description="In sa2206; homozygous mutant fishes have reduced head and eye size, dysmorphic jaw, lack of pharyngeal arches, flat head without protruding mouth, downward curvature of the anterior-posterior axis, aplastic swim bladder, impaired locomotor behavior and neuromuscular junction defects." evidence="3">
    <location>
        <begin position="244"/>
        <end position="720"/>
    </location>
</feature>
<feature type="mutagenesis site" description="Does not rescue developmental defects in sa2206 mutants." evidence="3">
    <original>D</original>
    <variation>Y</variation>
    <location>
        <position position="414"/>
    </location>
</feature>
<feature type="mutagenesis site" description="Does not rescue developmental defects in sa2206 mutants." evidence="3">
    <location>
        <begin position="490"/>
        <end position="720"/>
    </location>
</feature>
<feature type="mutagenesis site" description="Does not rescue developmental defects in sa2206 mutants." evidence="3">
    <location>
        <position position="613"/>
    </location>
</feature>
<feature type="sequence conflict" description="In Ref. 2; AAH95815." evidence="4" ref="2">
    <original>Q</original>
    <variation>L</variation>
    <location>
        <position position="93"/>
    </location>
</feature>
<feature type="sequence conflict" description="In Ref. 1; BX957294." evidence="4" ref="1">
    <original>V</original>
    <variation>L</variation>
    <location>
        <position position="140"/>
    </location>
</feature>
<feature type="sequence conflict" description="In Ref. 2; AAH95815." evidence="4" ref="2">
    <original>R</original>
    <variation>K</variation>
    <location>
        <position position="190"/>
    </location>
</feature>
<feature type="sequence conflict" description="In Ref. 1; BX957294 and 2; AAH95815." evidence="4" ref="1 2">
    <original>M</original>
    <variation>L</variation>
    <location>
        <position position="197"/>
    </location>
</feature>
<feature type="sequence conflict" description="In Ref. 2; AAH95815." evidence="4" ref="2">
    <original>I</original>
    <variation>T</variation>
    <location>
        <position position="704"/>
    </location>
</feature>
<protein>
    <recommendedName>
        <fullName evidence="5">Nucleoporin 88</fullName>
    </recommendedName>
</protein>
<evidence type="ECO:0000250" key="1">
    <source>
        <dbReference type="UniProtKB" id="Q99567"/>
    </source>
</evidence>
<evidence type="ECO:0000255" key="2"/>
<evidence type="ECO:0000269" key="3">
    <source>
    </source>
</evidence>
<evidence type="ECO:0000305" key="4"/>
<evidence type="ECO:0000312" key="5">
    <source>
        <dbReference type="ZFIN" id="ZDB-GENE-050522-297"/>
    </source>
</evidence>
<gene>
    <name evidence="5" type="primary">nup88</name>
</gene>
<reference key="1">
    <citation type="journal article" date="2013" name="Nature">
        <title>The zebrafish reference genome sequence and its relationship to the human genome.</title>
        <authorList>
            <person name="Howe K."/>
            <person name="Clark M.D."/>
            <person name="Torroja C.F."/>
            <person name="Torrance J."/>
            <person name="Berthelot C."/>
            <person name="Muffato M."/>
            <person name="Collins J.E."/>
            <person name="Humphray S."/>
            <person name="McLaren K."/>
            <person name="Matthews L."/>
            <person name="McLaren S."/>
            <person name="Sealy I."/>
            <person name="Caccamo M."/>
            <person name="Churcher C."/>
            <person name="Scott C."/>
            <person name="Barrett J.C."/>
            <person name="Koch R."/>
            <person name="Rauch G.J."/>
            <person name="White S."/>
            <person name="Chow W."/>
            <person name="Kilian B."/>
            <person name="Quintais L.T."/>
            <person name="Guerra-Assuncao J.A."/>
            <person name="Zhou Y."/>
            <person name="Gu Y."/>
            <person name="Yen J."/>
            <person name="Vogel J.H."/>
            <person name="Eyre T."/>
            <person name="Redmond S."/>
            <person name="Banerjee R."/>
            <person name="Chi J."/>
            <person name="Fu B."/>
            <person name="Langley E."/>
            <person name="Maguire S.F."/>
            <person name="Laird G.K."/>
            <person name="Lloyd D."/>
            <person name="Kenyon E."/>
            <person name="Donaldson S."/>
            <person name="Sehra H."/>
            <person name="Almeida-King J."/>
            <person name="Loveland J."/>
            <person name="Trevanion S."/>
            <person name="Jones M."/>
            <person name="Quail M."/>
            <person name="Willey D."/>
            <person name="Hunt A."/>
            <person name="Burton J."/>
            <person name="Sims S."/>
            <person name="McLay K."/>
            <person name="Plumb B."/>
            <person name="Davis J."/>
            <person name="Clee C."/>
            <person name="Oliver K."/>
            <person name="Clark R."/>
            <person name="Riddle C."/>
            <person name="Elliot D."/>
            <person name="Threadgold G."/>
            <person name="Harden G."/>
            <person name="Ware D."/>
            <person name="Begum S."/>
            <person name="Mortimore B."/>
            <person name="Kerry G."/>
            <person name="Heath P."/>
            <person name="Phillimore B."/>
            <person name="Tracey A."/>
            <person name="Corby N."/>
            <person name="Dunn M."/>
            <person name="Johnson C."/>
            <person name="Wood J."/>
            <person name="Clark S."/>
            <person name="Pelan S."/>
            <person name="Griffiths G."/>
            <person name="Smith M."/>
            <person name="Glithero R."/>
            <person name="Howden P."/>
            <person name="Barker N."/>
            <person name="Lloyd C."/>
            <person name="Stevens C."/>
            <person name="Harley J."/>
            <person name="Holt K."/>
            <person name="Panagiotidis G."/>
            <person name="Lovell J."/>
            <person name="Beasley H."/>
            <person name="Henderson C."/>
            <person name="Gordon D."/>
            <person name="Auger K."/>
            <person name="Wright D."/>
            <person name="Collins J."/>
            <person name="Raisen C."/>
            <person name="Dyer L."/>
            <person name="Leung K."/>
            <person name="Robertson L."/>
            <person name="Ambridge K."/>
            <person name="Leongamornlert D."/>
            <person name="McGuire S."/>
            <person name="Gilderthorp R."/>
            <person name="Griffiths C."/>
            <person name="Manthravadi D."/>
            <person name="Nichol S."/>
            <person name="Barker G."/>
            <person name="Whitehead S."/>
            <person name="Kay M."/>
            <person name="Brown J."/>
            <person name="Murnane C."/>
            <person name="Gray E."/>
            <person name="Humphries M."/>
            <person name="Sycamore N."/>
            <person name="Barker D."/>
            <person name="Saunders D."/>
            <person name="Wallis J."/>
            <person name="Babbage A."/>
            <person name="Hammond S."/>
            <person name="Mashreghi-Mohammadi M."/>
            <person name="Barr L."/>
            <person name="Martin S."/>
            <person name="Wray P."/>
            <person name="Ellington A."/>
            <person name="Matthews N."/>
            <person name="Ellwood M."/>
            <person name="Woodmansey R."/>
            <person name="Clark G."/>
            <person name="Cooper J."/>
            <person name="Tromans A."/>
            <person name="Grafham D."/>
            <person name="Skuce C."/>
            <person name="Pandian R."/>
            <person name="Andrews R."/>
            <person name="Harrison E."/>
            <person name="Kimberley A."/>
            <person name="Garnett J."/>
            <person name="Fosker N."/>
            <person name="Hall R."/>
            <person name="Garner P."/>
            <person name="Kelly D."/>
            <person name="Bird C."/>
            <person name="Palmer S."/>
            <person name="Gehring I."/>
            <person name="Berger A."/>
            <person name="Dooley C.M."/>
            <person name="Ersan-Urun Z."/>
            <person name="Eser C."/>
            <person name="Geiger H."/>
            <person name="Geisler M."/>
            <person name="Karotki L."/>
            <person name="Kirn A."/>
            <person name="Konantz J."/>
            <person name="Konantz M."/>
            <person name="Oberlander M."/>
            <person name="Rudolph-Geiger S."/>
            <person name="Teucke M."/>
            <person name="Lanz C."/>
            <person name="Raddatz G."/>
            <person name="Osoegawa K."/>
            <person name="Zhu B."/>
            <person name="Rapp A."/>
            <person name="Widaa S."/>
            <person name="Langford C."/>
            <person name="Yang F."/>
            <person name="Schuster S.C."/>
            <person name="Carter N.P."/>
            <person name="Harrow J."/>
            <person name="Ning Z."/>
            <person name="Herrero J."/>
            <person name="Searle S.M."/>
            <person name="Enright A."/>
            <person name="Geisler R."/>
            <person name="Plasterk R.H."/>
            <person name="Lee C."/>
            <person name="Westerfield M."/>
            <person name="de Jong P.J."/>
            <person name="Zon L.I."/>
            <person name="Postlethwait J.H."/>
            <person name="Nusslein-Volhard C."/>
            <person name="Hubbard T.J."/>
            <person name="Roest Crollius H."/>
            <person name="Rogers J."/>
            <person name="Stemple D.L."/>
        </authorList>
    </citation>
    <scope>NUCLEOTIDE SEQUENCE [LARGE SCALE GENOMIC DNA]</scope>
    <source>
        <strain>Tuebingen</strain>
    </source>
</reference>
<reference key="2">
    <citation type="submission" date="2005-05" db="EMBL/GenBank/DDBJ databases">
        <authorList>
            <consortium name="NIH - Zebrafish Gene Collection (ZGC) project"/>
        </authorList>
    </citation>
    <scope>NUCLEOTIDE SEQUENCE [LARGE SCALE MRNA]</scope>
    <source>
        <tissue>Olfactory epithelium</tissue>
    </source>
</reference>
<reference key="3">
    <citation type="journal article" date="2018" name="PLoS Genet.">
        <title>Biallelic mutations in nucleoporin NUP88 cause lethal fetal akinesia deformation sequence.</title>
        <authorList>
            <person name="Bonnin E."/>
            <person name="Cabochette P."/>
            <person name="Filosa A."/>
            <person name="Juehlen R."/>
            <person name="Komatsuzaki S."/>
            <person name="Hezwani M."/>
            <person name="Dickmanns A."/>
            <person name="Martinelli V."/>
            <person name="Vermeersch M."/>
            <person name="Supply L."/>
            <person name="Martins N."/>
            <person name="Pirenne L."/>
            <person name="Ravenscroft G."/>
            <person name="Lombard M."/>
            <person name="Port S."/>
            <person name="Spillner C."/>
            <person name="Janssens S."/>
            <person name="Roets E."/>
            <person name="Van Dorpe J."/>
            <person name="Lammens M."/>
            <person name="Kehlenbach R.H."/>
            <person name="Ficner R."/>
            <person name="Laing N.G."/>
            <person name="Hoffmann K."/>
            <person name="Vanhollebeke B."/>
            <person name="Fahrenkrog B."/>
        </authorList>
    </citation>
    <scope>TISSUE SPECIFICITY</scope>
    <scope>MUTAGENESIS OF 244-TYR--PHE-720; ASP-414; 490-HIS--PHE-720 AND GLU-613</scope>
</reference>
<dbReference type="EMBL" id="CR450697">
    <property type="status" value="NOT_ANNOTATED_CDS"/>
    <property type="molecule type" value="Genomic_DNA"/>
</dbReference>
<dbReference type="EMBL" id="BX957294">
    <property type="status" value="NOT_ANNOTATED_CDS"/>
    <property type="molecule type" value="Genomic_DNA"/>
</dbReference>
<dbReference type="EMBL" id="BC095815">
    <property type="protein sequence ID" value="AAH95815.1"/>
    <property type="molecule type" value="mRNA"/>
</dbReference>
<dbReference type="RefSeq" id="NP_001018302.1">
    <property type="nucleotide sequence ID" value="NM_001020466.1"/>
</dbReference>
<dbReference type="SMR" id="A2CEI4"/>
<dbReference type="FunCoup" id="A2CEI4">
    <property type="interactions" value="1619"/>
</dbReference>
<dbReference type="STRING" id="7955.ENSDARP00000025718"/>
<dbReference type="PaxDb" id="7955-ENSDARP00000025718"/>
<dbReference type="PeptideAtlas" id="A2CEI4"/>
<dbReference type="Ensembl" id="ENSDART00000023123">
    <property type="protein sequence ID" value="ENSDARP00000025718"/>
    <property type="gene ID" value="ENSDARG00000003235"/>
</dbReference>
<dbReference type="GeneID" id="321744"/>
<dbReference type="KEGG" id="dre:321744"/>
<dbReference type="AGR" id="ZFIN:ZDB-GENE-050522-297"/>
<dbReference type="CTD" id="4927"/>
<dbReference type="ZFIN" id="ZDB-GENE-050522-297">
    <property type="gene designation" value="nup88"/>
</dbReference>
<dbReference type="eggNOG" id="KOG4460">
    <property type="taxonomic scope" value="Eukaryota"/>
</dbReference>
<dbReference type="HOGENOM" id="CLU_017144_0_0_1"/>
<dbReference type="InParanoid" id="A2CEI4"/>
<dbReference type="OMA" id="AYSCPIH"/>
<dbReference type="OrthoDB" id="341482at2759"/>
<dbReference type="PhylomeDB" id="A2CEI4"/>
<dbReference type="TreeFam" id="TF105307"/>
<dbReference type="PRO" id="PR:A2CEI4"/>
<dbReference type="Proteomes" id="UP000000437">
    <property type="component" value="Alternate scaffold 5"/>
</dbReference>
<dbReference type="Proteomes" id="UP000000437">
    <property type="component" value="Chromosome 5"/>
</dbReference>
<dbReference type="Bgee" id="ENSDARG00000003235">
    <property type="expression patterns" value="Expressed in gastrula and 21 other cell types or tissues"/>
</dbReference>
<dbReference type="GO" id="GO:0005643">
    <property type="term" value="C:nuclear pore"/>
    <property type="evidence" value="ECO:0000318"/>
    <property type="project" value="GO_Central"/>
</dbReference>
<dbReference type="GO" id="GO:0017056">
    <property type="term" value="F:structural constituent of nuclear pore"/>
    <property type="evidence" value="ECO:0007669"/>
    <property type="project" value="InterPro"/>
</dbReference>
<dbReference type="GO" id="GO:0006406">
    <property type="term" value="P:mRNA export from nucleus"/>
    <property type="evidence" value="ECO:0000318"/>
    <property type="project" value="GO_Central"/>
</dbReference>
<dbReference type="GO" id="GO:0006606">
    <property type="term" value="P:protein import into nucleus"/>
    <property type="evidence" value="ECO:0000318"/>
    <property type="project" value="GO_Central"/>
</dbReference>
<dbReference type="GO" id="GO:0000055">
    <property type="term" value="P:ribosomal large subunit export from nucleus"/>
    <property type="evidence" value="ECO:0000318"/>
    <property type="project" value="GO_Central"/>
</dbReference>
<dbReference type="GO" id="GO:0000056">
    <property type="term" value="P:ribosomal small subunit export from nucleus"/>
    <property type="evidence" value="ECO:0000318"/>
    <property type="project" value="GO_Central"/>
</dbReference>
<dbReference type="InterPro" id="IPR019321">
    <property type="entry name" value="Nucleoporin_Nup88"/>
</dbReference>
<dbReference type="InterPro" id="IPR037700">
    <property type="entry name" value="NUP88/NUP82"/>
</dbReference>
<dbReference type="PANTHER" id="PTHR13257:SF0">
    <property type="entry name" value="NUCLEAR PORE COMPLEX PROTEIN NUP88"/>
    <property type="match status" value="1"/>
</dbReference>
<dbReference type="PANTHER" id="PTHR13257">
    <property type="entry name" value="NUCLEOPORIN NUP84-RELATED"/>
    <property type="match status" value="1"/>
</dbReference>
<dbReference type="Pfam" id="PF10168">
    <property type="entry name" value="Nup88"/>
    <property type="match status" value="1"/>
</dbReference>
<name>NUP88_DANRE</name>
<accession>A2CEI4</accession>
<accession>A0A2R8QUY6</accession>
<accession>Q501Y6</accession>
<keyword id="KW-0175">Coiled coil</keyword>
<keyword id="KW-0509">mRNA transport</keyword>
<keyword id="KW-0906">Nuclear pore complex</keyword>
<keyword id="KW-0539">Nucleus</keyword>
<keyword id="KW-0653">Protein transport</keyword>
<keyword id="KW-1185">Reference proteome</keyword>
<keyword id="KW-0811">Translocation</keyword>
<keyword id="KW-0813">Transport</keyword>